<reference key="1">
    <citation type="submission" date="2008-01" db="EMBL/GenBank/DDBJ databases">
        <title>Complete sequence of Pseudomonas putida GB-1.</title>
        <authorList>
            <consortium name="US DOE Joint Genome Institute"/>
            <person name="Copeland A."/>
            <person name="Lucas S."/>
            <person name="Lapidus A."/>
            <person name="Barry K."/>
            <person name="Glavina del Rio T."/>
            <person name="Dalin E."/>
            <person name="Tice H."/>
            <person name="Pitluck S."/>
            <person name="Bruce D."/>
            <person name="Goodwin L."/>
            <person name="Chertkov O."/>
            <person name="Brettin T."/>
            <person name="Detter J.C."/>
            <person name="Han C."/>
            <person name="Kuske C.R."/>
            <person name="Schmutz J."/>
            <person name="Larimer F."/>
            <person name="Land M."/>
            <person name="Hauser L."/>
            <person name="Kyrpides N."/>
            <person name="Kim E."/>
            <person name="McCarthy J.K."/>
            <person name="Richardson P."/>
        </authorList>
    </citation>
    <scope>NUCLEOTIDE SEQUENCE [LARGE SCALE GENOMIC DNA]</scope>
    <source>
        <strain>GB-1</strain>
    </source>
</reference>
<organism>
    <name type="scientific">Pseudomonas putida (strain GB-1)</name>
    <dbReference type="NCBI Taxonomy" id="76869"/>
    <lineage>
        <taxon>Bacteria</taxon>
        <taxon>Pseudomonadati</taxon>
        <taxon>Pseudomonadota</taxon>
        <taxon>Gammaproteobacteria</taxon>
        <taxon>Pseudomonadales</taxon>
        <taxon>Pseudomonadaceae</taxon>
        <taxon>Pseudomonas</taxon>
    </lineage>
</organism>
<gene>
    <name evidence="1" type="primary">ureG</name>
    <name type="ordered locus">PputGB1_2931</name>
</gene>
<accession>B0KUZ3</accession>
<dbReference type="EMBL" id="CP000926">
    <property type="protein sequence ID" value="ABY98825.1"/>
    <property type="molecule type" value="Genomic_DNA"/>
</dbReference>
<dbReference type="RefSeq" id="WP_010953755.1">
    <property type="nucleotide sequence ID" value="NC_010322.1"/>
</dbReference>
<dbReference type="SMR" id="B0KUZ3"/>
<dbReference type="GeneID" id="97167996"/>
<dbReference type="KEGG" id="ppg:PputGB1_2931"/>
<dbReference type="eggNOG" id="COG0378">
    <property type="taxonomic scope" value="Bacteria"/>
</dbReference>
<dbReference type="HOGENOM" id="CLU_072144_1_0_6"/>
<dbReference type="Proteomes" id="UP000002157">
    <property type="component" value="Chromosome"/>
</dbReference>
<dbReference type="GO" id="GO:0005737">
    <property type="term" value="C:cytoplasm"/>
    <property type="evidence" value="ECO:0007669"/>
    <property type="project" value="UniProtKB-SubCell"/>
</dbReference>
<dbReference type="GO" id="GO:0005525">
    <property type="term" value="F:GTP binding"/>
    <property type="evidence" value="ECO:0007669"/>
    <property type="project" value="UniProtKB-KW"/>
</dbReference>
<dbReference type="GO" id="GO:0003924">
    <property type="term" value="F:GTPase activity"/>
    <property type="evidence" value="ECO:0007669"/>
    <property type="project" value="InterPro"/>
</dbReference>
<dbReference type="GO" id="GO:0016151">
    <property type="term" value="F:nickel cation binding"/>
    <property type="evidence" value="ECO:0007669"/>
    <property type="project" value="UniProtKB-UniRule"/>
</dbReference>
<dbReference type="GO" id="GO:0043419">
    <property type="term" value="P:urea catabolic process"/>
    <property type="evidence" value="ECO:0007669"/>
    <property type="project" value="InterPro"/>
</dbReference>
<dbReference type="CDD" id="cd05540">
    <property type="entry name" value="UreG"/>
    <property type="match status" value="1"/>
</dbReference>
<dbReference type="FunFam" id="3.40.50.300:FF:000208">
    <property type="entry name" value="Urease accessory protein UreG"/>
    <property type="match status" value="1"/>
</dbReference>
<dbReference type="Gene3D" id="3.40.50.300">
    <property type="entry name" value="P-loop containing nucleotide triphosphate hydrolases"/>
    <property type="match status" value="1"/>
</dbReference>
<dbReference type="HAMAP" id="MF_01389">
    <property type="entry name" value="UreG"/>
    <property type="match status" value="1"/>
</dbReference>
<dbReference type="InterPro" id="IPR003495">
    <property type="entry name" value="CobW/HypB/UreG_nucleotide-bd"/>
</dbReference>
<dbReference type="InterPro" id="IPR027417">
    <property type="entry name" value="P-loop_NTPase"/>
</dbReference>
<dbReference type="InterPro" id="IPR004400">
    <property type="entry name" value="UreG"/>
</dbReference>
<dbReference type="NCBIfam" id="TIGR00101">
    <property type="entry name" value="ureG"/>
    <property type="match status" value="1"/>
</dbReference>
<dbReference type="PANTHER" id="PTHR31715">
    <property type="entry name" value="UREASE ACCESSORY PROTEIN G"/>
    <property type="match status" value="1"/>
</dbReference>
<dbReference type="PANTHER" id="PTHR31715:SF0">
    <property type="entry name" value="UREASE ACCESSORY PROTEIN G"/>
    <property type="match status" value="1"/>
</dbReference>
<dbReference type="Pfam" id="PF02492">
    <property type="entry name" value="cobW"/>
    <property type="match status" value="1"/>
</dbReference>
<dbReference type="PIRSF" id="PIRSF005624">
    <property type="entry name" value="Ni-bind_GTPase"/>
    <property type="match status" value="1"/>
</dbReference>
<dbReference type="SUPFAM" id="SSF52540">
    <property type="entry name" value="P-loop containing nucleoside triphosphate hydrolases"/>
    <property type="match status" value="1"/>
</dbReference>
<feature type="chain" id="PRO_0000347426" description="Urease accessory protein UreG">
    <location>
        <begin position="1"/>
        <end position="207"/>
    </location>
</feature>
<feature type="binding site" evidence="1">
    <location>
        <begin position="14"/>
        <end position="21"/>
    </location>
    <ligand>
        <name>GTP</name>
        <dbReference type="ChEBI" id="CHEBI:37565"/>
    </ligand>
</feature>
<protein>
    <recommendedName>
        <fullName evidence="1">Urease accessory protein UreG</fullName>
    </recommendedName>
</protein>
<proteinExistence type="inferred from homology"/>
<comment type="function">
    <text evidence="1">Facilitates the functional incorporation of the urease nickel metallocenter. This process requires GTP hydrolysis, probably effectuated by UreG.</text>
</comment>
<comment type="subunit">
    <text evidence="1">Homodimer. UreD, UreF and UreG form a complex that acts as a GTP-hydrolysis-dependent molecular chaperone, activating the urease apoprotein by helping to assemble the nickel containing metallocenter of UreC. The UreE protein probably delivers the nickel.</text>
</comment>
<comment type="subcellular location">
    <subcellularLocation>
        <location evidence="1">Cytoplasm</location>
    </subcellularLocation>
</comment>
<comment type="similarity">
    <text evidence="1">Belongs to the SIMIBI class G3E GTPase family. UreG subfamily.</text>
</comment>
<evidence type="ECO:0000255" key="1">
    <source>
        <dbReference type="HAMAP-Rule" id="MF_01389"/>
    </source>
</evidence>
<name>UREG_PSEPG</name>
<keyword id="KW-0143">Chaperone</keyword>
<keyword id="KW-0963">Cytoplasm</keyword>
<keyword id="KW-0342">GTP-binding</keyword>
<keyword id="KW-0996">Nickel insertion</keyword>
<keyword id="KW-0547">Nucleotide-binding</keyword>
<sequence length="207" mass="22449">MQSYQQPLRVGVGGPVGSGKTALLEALCKAMRDHYQIAVVTNDIYTKEDQRILTEAGALEPERIVGVETGGCPHTAIREDASMNLAAVEALARKFGNLEVIFVESGGDNLSATFSPELADLTIYVIDVAEGEKIPRKGGPGITKSDFLVINKTDLAPYVGASLEVMERDTQRMRPQRPWTFSNLKKGEGLQAVIDFIVERGMLGVRG</sequence>